<reference key="1">
    <citation type="submission" date="2008-06" db="EMBL/GenBank/DDBJ databases">
        <title>Complete sequence of Chlorobaculum parvum NCIB 8327.</title>
        <authorList>
            <consortium name="US DOE Joint Genome Institute"/>
            <person name="Lucas S."/>
            <person name="Copeland A."/>
            <person name="Lapidus A."/>
            <person name="Glavina del Rio T."/>
            <person name="Dalin E."/>
            <person name="Tice H."/>
            <person name="Bruce D."/>
            <person name="Goodwin L."/>
            <person name="Pitluck S."/>
            <person name="Schmutz J."/>
            <person name="Larimer F."/>
            <person name="Land M."/>
            <person name="Hauser L."/>
            <person name="Kyrpides N."/>
            <person name="Mikhailova N."/>
            <person name="Zhao F."/>
            <person name="Li T."/>
            <person name="Liu Z."/>
            <person name="Overmann J."/>
            <person name="Bryant D.A."/>
            <person name="Richardson P."/>
        </authorList>
    </citation>
    <scope>NUCLEOTIDE SEQUENCE [LARGE SCALE GENOMIC DNA]</scope>
    <source>
        <strain>DSM 263 / NCIMB 8327</strain>
    </source>
</reference>
<feature type="chain" id="PRO_1000187649" description="Membrane protein insertase YidC">
    <location>
        <begin position="1"/>
        <end position="587"/>
    </location>
</feature>
<feature type="transmembrane region" description="Helical" evidence="1">
    <location>
        <begin position="5"/>
        <end position="25"/>
    </location>
</feature>
<feature type="transmembrane region" description="Helical" evidence="1">
    <location>
        <begin position="365"/>
        <end position="385"/>
    </location>
</feature>
<feature type="transmembrane region" description="Helical" evidence="1">
    <location>
        <begin position="430"/>
        <end position="450"/>
    </location>
</feature>
<feature type="transmembrane region" description="Helical" evidence="1">
    <location>
        <begin position="480"/>
        <end position="500"/>
    </location>
</feature>
<feature type="transmembrane region" description="Helical" evidence="1">
    <location>
        <begin position="516"/>
        <end position="536"/>
    </location>
</feature>
<comment type="function">
    <text evidence="1">Required for the insertion and/or proper folding and/or complex formation of integral membrane proteins into the membrane. Involved in integration of membrane proteins that insert both dependently and independently of the Sec translocase complex, as well as at least some lipoproteins. Aids folding of multispanning membrane proteins.</text>
</comment>
<comment type="subunit">
    <text evidence="1">Interacts with the Sec translocase complex via SecD. Specifically interacts with transmembrane segments of nascent integral membrane proteins during membrane integration.</text>
</comment>
<comment type="subcellular location">
    <subcellularLocation>
        <location evidence="1">Cell inner membrane</location>
        <topology evidence="1">Multi-pass membrane protein</topology>
    </subcellularLocation>
</comment>
<comment type="similarity">
    <text evidence="1">Belongs to the OXA1/ALB3/YidC family. Type 1 subfamily.</text>
</comment>
<proteinExistence type="inferred from homology"/>
<dbReference type="EMBL" id="CP001099">
    <property type="protein sequence ID" value="ACF12470.1"/>
    <property type="molecule type" value="Genomic_DNA"/>
</dbReference>
<dbReference type="RefSeq" id="WP_012503303.1">
    <property type="nucleotide sequence ID" value="NC_011027.1"/>
</dbReference>
<dbReference type="SMR" id="B3QLY4"/>
<dbReference type="STRING" id="517417.Cpar_2085"/>
<dbReference type="KEGG" id="cpc:Cpar_2085"/>
<dbReference type="eggNOG" id="COG0706">
    <property type="taxonomic scope" value="Bacteria"/>
</dbReference>
<dbReference type="HOGENOM" id="CLU_016535_2_0_10"/>
<dbReference type="OrthoDB" id="9780552at2"/>
<dbReference type="Proteomes" id="UP000008811">
    <property type="component" value="Chromosome"/>
</dbReference>
<dbReference type="GO" id="GO:0005886">
    <property type="term" value="C:plasma membrane"/>
    <property type="evidence" value="ECO:0007669"/>
    <property type="project" value="UniProtKB-SubCell"/>
</dbReference>
<dbReference type="GO" id="GO:0032977">
    <property type="term" value="F:membrane insertase activity"/>
    <property type="evidence" value="ECO:0007669"/>
    <property type="project" value="InterPro"/>
</dbReference>
<dbReference type="GO" id="GO:0051205">
    <property type="term" value="P:protein insertion into membrane"/>
    <property type="evidence" value="ECO:0007669"/>
    <property type="project" value="TreeGrafter"/>
</dbReference>
<dbReference type="GO" id="GO:0015031">
    <property type="term" value="P:protein transport"/>
    <property type="evidence" value="ECO:0007669"/>
    <property type="project" value="UniProtKB-KW"/>
</dbReference>
<dbReference type="CDD" id="cd20070">
    <property type="entry name" value="5TM_YidC_Alb3"/>
    <property type="match status" value="1"/>
</dbReference>
<dbReference type="CDD" id="cd19961">
    <property type="entry name" value="EcYidC-like_peri"/>
    <property type="match status" value="1"/>
</dbReference>
<dbReference type="Gene3D" id="2.70.98.90">
    <property type="match status" value="1"/>
</dbReference>
<dbReference type="HAMAP" id="MF_01810">
    <property type="entry name" value="YidC_type1"/>
    <property type="match status" value="1"/>
</dbReference>
<dbReference type="InterPro" id="IPR019998">
    <property type="entry name" value="Membr_insert_YidC"/>
</dbReference>
<dbReference type="InterPro" id="IPR028053">
    <property type="entry name" value="Membr_insert_YidC_N"/>
</dbReference>
<dbReference type="InterPro" id="IPR001708">
    <property type="entry name" value="YidC/ALB3/OXA1/COX18"/>
</dbReference>
<dbReference type="InterPro" id="IPR028055">
    <property type="entry name" value="YidC/Oxa/ALB_C"/>
</dbReference>
<dbReference type="InterPro" id="IPR047196">
    <property type="entry name" value="YidC_ALB_C"/>
</dbReference>
<dbReference type="InterPro" id="IPR038221">
    <property type="entry name" value="YidC_periplasmic_sf"/>
</dbReference>
<dbReference type="NCBIfam" id="TIGR03593">
    <property type="entry name" value="yidC_nterm"/>
    <property type="match status" value="1"/>
</dbReference>
<dbReference type="NCBIfam" id="TIGR03592">
    <property type="entry name" value="yidC_oxa1_cterm"/>
    <property type="match status" value="1"/>
</dbReference>
<dbReference type="PANTHER" id="PTHR12428:SF65">
    <property type="entry name" value="CYTOCHROME C OXIDASE ASSEMBLY PROTEIN COX18, MITOCHONDRIAL"/>
    <property type="match status" value="1"/>
</dbReference>
<dbReference type="PANTHER" id="PTHR12428">
    <property type="entry name" value="OXA1"/>
    <property type="match status" value="1"/>
</dbReference>
<dbReference type="Pfam" id="PF02096">
    <property type="entry name" value="60KD_IMP"/>
    <property type="match status" value="1"/>
</dbReference>
<dbReference type="Pfam" id="PF14849">
    <property type="entry name" value="YidC_periplas"/>
    <property type="match status" value="1"/>
</dbReference>
<dbReference type="PRINTS" id="PR00701">
    <property type="entry name" value="60KDINNERMP"/>
</dbReference>
<dbReference type="PRINTS" id="PR01900">
    <property type="entry name" value="YIDCPROTEIN"/>
</dbReference>
<evidence type="ECO:0000255" key="1">
    <source>
        <dbReference type="HAMAP-Rule" id="MF_01810"/>
    </source>
</evidence>
<protein>
    <recommendedName>
        <fullName evidence="1">Membrane protein insertase YidC</fullName>
    </recommendedName>
    <alternativeName>
        <fullName evidence="1">Foldase YidC</fullName>
    </alternativeName>
    <alternativeName>
        <fullName evidence="1">Membrane integrase YidC</fullName>
    </alternativeName>
    <alternativeName>
        <fullName evidence="1">Membrane protein YidC</fullName>
    </alternativeName>
</protein>
<keyword id="KW-0997">Cell inner membrane</keyword>
<keyword id="KW-1003">Cell membrane</keyword>
<keyword id="KW-0143">Chaperone</keyword>
<keyword id="KW-0472">Membrane</keyword>
<keyword id="KW-0653">Protein transport</keyword>
<keyword id="KW-0812">Transmembrane</keyword>
<keyword id="KW-1133">Transmembrane helix</keyword>
<keyword id="KW-0813">Transport</keyword>
<sequence>MDRNSVIGFSLIAVIMIVWLQFMKPEQKTMLDPVPPSREMVQKDAAENAPASAAPETAAESLGSFAKASTGTEQIITVDNDLFTAELSSKGATLKSMVLKKHLDVNGKPFNLISEKNKGALSMLFLSNDGKRIDTRDLYFRSLDTKKSETVTGKEKLSVSFVLDVDASRSMQVTYTFTGDSYVIDYDLKLNGFGSTLAGNEYQLDWDGGLVYSEKDTADESHNAISSAYLGGGLLKLDAKDSKKRYQEEESGKAEWVAVRNKYFVAAMIPERETEGVFLQGTKKDGVDFENYTAALKMMIPAGQNSVTDRYRLYVGPLDYNTVRSLHVDLEKIMDFGWDWLTRPFAEYLILPIFNWMNKYVTNYGLIIIIFAFLIKTVTWPLSLASTKSMKKMSALQPMMKEIQEKYKNDPAKLQSELGRIYKEAGVNPLGGCLPTVIQMPLLFAMFYVFRSSIQLRQHGFLWVKDLSVPDSILDFGFKLPLYGDHIALMPILMAVTVFFQQKITPTTQTNDQMKIMIWMFPAMMLLFFNNMPSGLALYYLMFNVFSIAQQAYINATVSDEDKAAAAMQVAASASPSKGAKKGGKKK</sequence>
<gene>
    <name evidence="1" type="primary">yidC</name>
    <name type="ordered locus">Cpar_2085</name>
</gene>
<organism>
    <name type="scientific">Chlorobaculum parvum (strain DSM 263 / NCIMB 8327)</name>
    <name type="common">Chlorobium vibrioforme subsp. thiosulfatophilum</name>
    <dbReference type="NCBI Taxonomy" id="517417"/>
    <lineage>
        <taxon>Bacteria</taxon>
        <taxon>Pseudomonadati</taxon>
        <taxon>Chlorobiota</taxon>
        <taxon>Chlorobiia</taxon>
        <taxon>Chlorobiales</taxon>
        <taxon>Chlorobiaceae</taxon>
        <taxon>Chlorobaculum</taxon>
    </lineage>
</organism>
<accession>B3QLY4</accession>
<name>YIDC_CHLP8</name>